<organism>
    <name type="scientific">Pseudomonas aeruginosa (strain UCBPP-PA14)</name>
    <dbReference type="NCBI Taxonomy" id="208963"/>
    <lineage>
        <taxon>Bacteria</taxon>
        <taxon>Pseudomonadati</taxon>
        <taxon>Pseudomonadota</taxon>
        <taxon>Gammaproteobacteria</taxon>
        <taxon>Pseudomonadales</taxon>
        <taxon>Pseudomonadaceae</taxon>
        <taxon>Pseudomonas</taxon>
    </lineage>
</organism>
<proteinExistence type="inferred from homology"/>
<dbReference type="EC" id="2.4.2.1" evidence="1"/>
<dbReference type="EC" id="2.4.2.2" evidence="1"/>
<dbReference type="EMBL" id="CP000438">
    <property type="protein sequence ID" value="ABJ10754.1"/>
    <property type="molecule type" value="Genomic_DNA"/>
</dbReference>
<dbReference type="RefSeq" id="WP_003087375.1">
    <property type="nucleotide sequence ID" value="NZ_CP034244.1"/>
</dbReference>
<dbReference type="SMR" id="Q02K58"/>
<dbReference type="KEGG" id="pau:PA14_44140"/>
<dbReference type="PseudoCAP" id="PA14_44140"/>
<dbReference type="HOGENOM" id="CLU_157874_0_0_6"/>
<dbReference type="BioCyc" id="PAER208963:G1G74-3701-MONOMER"/>
<dbReference type="Proteomes" id="UP000000653">
    <property type="component" value="Chromosome"/>
</dbReference>
<dbReference type="GO" id="GO:0005829">
    <property type="term" value="C:cytosol"/>
    <property type="evidence" value="ECO:0007669"/>
    <property type="project" value="TreeGrafter"/>
</dbReference>
<dbReference type="GO" id="GO:0047975">
    <property type="term" value="F:guanosine phosphorylase activity"/>
    <property type="evidence" value="ECO:0007669"/>
    <property type="project" value="UniProtKB-EC"/>
</dbReference>
<dbReference type="GO" id="GO:0004731">
    <property type="term" value="F:purine-nucleoside phosphorylase activity"/>
    <property type="evidence" value="ECO:0007669"/>
    <property type="project" value="UniProtKB-UniRule"/>
</dbReference>
<dbReference type="GO" id="GO:0009032">
    <property type="term" value="F:thymidine phosphorylase activity"/>
    <property type="evidence" value="ECO:0007669"/>
    <property type="project" value="UniProtKB-EC"/>
</dbReference>
<dbReference type="GO" id="GO:0004850">
    <property type="term" value="F:uridine phosphorylase activity"/>
    <property type="evidence" value="ECO:0007669"/>
    <property type="project" value="UniProtKB-EC"/>
</dbReference>
<dbReference type="CDD" id="cd20296">
    <property type="entry name" value="cupin_PpnP-like"/>
    <property type="match status" value="1"/>
</dbReference>
<dbReference type="FunFam" id="2.60.120.10:FF:000016">
    <property type="entry name" value="Pyrimidine/purine nucleoside phosphorylase"/>
    <property type="match status" value="1"/>
</dbReference>
<dbReference type="Gene3D" id="2.60.120.10">
    <property type="entry name" value="Jelly Rolls"/>
    <property type="match status" value="1"/>
</dbReference>
<dbReference type="HAMAP" id="MF_01537">
    <property type="entry name" value="Nucleos_phosphorylase_PpnP"/>
    <property type="match status" value="1"/>
</dbReference>
<dbReference type="InterPro" id="IPR009664">
    <property type="entry name" value="Ppnp"/>
</dbReference>
<dbReference type="InterPro" id="IPR014710">
    <property type="entry name" value="RmlC-like_jellyroll"/>
</dbReference>
<dbReference type="InterPro" id="IPR011051">
    <property type="entry name" value="RmlC_Cupin_sf"/>
</dbReference>
<dbReference type="PANTHER" id="PTHR36540">
    <property type="entry name" value="PYRIMIDINE/PURINE NUCLEOSIDE PHOSPHORYLASE"/>
    <property type="match status" value="1"/>
</dbReference>
<dbReference type="PANTHER" id="PTHR36540:SF1">
    <property type="entry name" value="PYRIMIDINE_PURINE NUCLEOSIDE PHOSPHORYLASE"/>
    <property type="match status" value="1"/>
</dbReference>
<dbReference type="Pfam" id="PF06865">
    <property type="entry name" value="Ppnp"/>
    <property type="match status" value="1"/>
</dbReference>
<dbReference type="SUPFAM" id="SSF51182">
    <property type="entry name" value="RmlC-like cupins"/>
    <property type="match status" value="1"/>
</dbReference>
<accession>Q02K58</accession>
<evidence type="ECO:0000255" key="1">
    <source>
        <dbReference type="HAMAP-Rule" id="MF_01537"/>
    </source>
</evidence>
<sequence length="93" mass="10156">MFKVNEYFDGTVKSIAFDMTAGPATIGVMAAGEYEFGTSQLEIMHVVAGALTVKLPGSDEWQEYASGSQFTVPANSKFQLKVAQDTAYLCEYR</sequence>
<gene>
    <name evidence="1" type="primary">ppnP</name>
    <name type="ordered locus">PA14_44140</name>
</gene>
<keyword id="KW-0328">Glycosyltransferase</keyword>
<keyword id="KW-0808">Transferase</keyword>
<comment type="function">
    <text evidence="1">Catalyzes the phosphorolysis of diverse nucleosides, yielding D-ribose 1-phosphate and the respective free bases. Can use uridine, adenosine, guanosine, cytidine, thymidine, inosine and xanthosine as substrates. Also catalyzes the reverse reactions.</text>
</comment>
<comment type="catalytic activity">
    <reaction evidence="1">
        <text>a purine D-ribonucleoside + phosphate = a purine nucleobase + alpha-D-ribose 1-phosphate</text>
        <dbReference type="Rhea" id="RHEA:19805"/>
        <dbReference type="ChEBI" id="CHEBI:26386"/>
        <dbReference type="ChEBI" id="CHEBI:43474"/>
        <dbReference type="ChEBI" id="CHEBI:57720"/>
        <dbReference type="ChEBI" id="CHEBI:142355"/>
        <dbReference type="EC" id="2.4.2.1"/>
    </reaction>
</comment>
<comment type="catalytic activity">
    <reaction evidence="1">
        <text>adenosine + phosphate = alpha-D-ribose 1-phosphate + adenine</text>
        <dbReference type="Rhea" id="RHEA:27642"/>
        <dbReference type="ChEBI" id="CHEBI:16335"/>
        <dbReference type="ChEBI" id="CHEBI:16708"/>
        <dbReference type="ChEBI" id="CHEBI:43474"/>
        <dbReference type="ChEBI" id="CHEBI:57720"/>
        <dbReference type="EC" id="2.4.2.1"/>
    </reaction>
</comment>
<comment type="catalytic activity">
    <reaction evidence="1">
        <text>cytidine + phosphate = cytosine + alpha-D-ribose 1-phosphate</text>
        <dbReference type="Rhea" id="RHEA:52540"/>
        <dbReference type="ChEBI" id="CHEBI:16040"/>
        <dbReference type="ChEBI" id="CHEBI:17562"/>
        <dbReference type="ChEBI" id="CHEBI:43474"/>
        <dbReference type="ChEBI" id="CHEBI:57720"/>
        <dbReference type="EC" id="2.4.2.2"/>
    </reaction>
</comment>
<comment type="catalytic activity">
    <reaction evidence="1">
        <text>guanosine + phosphate = alpha-D-ribose 1-phosphate + guanine</text>
        <dbReference type="Rhea" id="RHEA:13233"/>
        <dbReference type="ChEBI" id="CHEBI:16235"/>
        <dbReference type="ChEBI" id="CHEBI:16750"/>
        <dbReference type="ChEBI" id="CHEBI:43474"/>
        <dbReference type="ChEBI" id="CHEBI:57720"/>
        <dbReference type="EC" id="2.4.2.1"/>
    </reaction>
</comment>
<comment type="catalytic activity">
    <reaction evidence="1">
        <text>inosine + phosphate = alpha-D-ribose 1-phosphate + hypoxanthine</text>
        <dbReference type="Rhea" id="RHEA:27646"/>
        <dbReference type="ChEBI" id="CHEBI:17368"/>
        <dbReference type="ChEBI" id="CHEBI:17596"/>
        <dbReference type="ChEBI" id="CHEBI:43474"/>
        <dbReference type="ChEBI" id="CHEBI:57720"/>
        <dbReference type="EC" id="2.4.2.1"/>
    </reaction>
</comment>
<comment type="catalytic activity">
    <reaction evidence="1">
        <text>thymidine + phosphate = 2-deoxy-alpha-D-ribose 1-phosphate + thymine</text>
        <dbReference type="Rhea" id="RHEA:16037"/>
        <dbReference type="ChEBI" id="CHEBI:17748"/>
        <dbReference type="ChEBI" id="CHEBI:17821"/>
        <dbReference type="ChEBI" id="CHEBI:43474"/>
        <dbReference type="ChEBI" id="CHEBI:57259"/>
        <dbReference type="EC" id="2.4.2.2"/>
    </reaction>
</comment>
<comment type="catalytic activity">
    <reaction evidence="1">
        <text>uridine + phosphate = alpha-D-ribose 1-phosphate + uracil</text>
        <dbReference type="Rhea" id="RHEA:24388"/>
        <dbReference type="ChEBI" id="CHEBI:16704"/>
        <dbReference type="ChEBI" id="CHEBI:17568"/>
        <dbReference type="ChEBI" id="CHEBI:43474"/>
        <dbReference type="ChEBI" id="CHEBI:57720"/>
        <dbReference type="EC" id="2.4.2.2"/>
    </reaction>
</comment>
<comment type="catalytic activity">
    <reaction evidence="1">
        <text>xanthosine + phosphate = alpha-D-ribose 1-phosphate + xanthine</text>
        <dbReference type="Rhea" id="RHEA:27638"/>
        <dbReference type="ChEBI" id="CHEBI:17712"/>
        <dbReference type="ChEBI" id="CHEBI:18107"/>
        <dbReference type="ChEBI" id="CHEBI:43474"/>
        <dbReference type="ChEBI" id="CHEBI:57720"/>
        <dbReference type="EC" id="2.4.2.1"/>
    </reaction>
</comment>
<comment type="similarity">
    <text evidence="1">Belongs to the nucleoside phosphorylase PpnP family.</text>
</comment>
<feature type="chain" id="PRO_0000298709" description="Pyrimidine/purine nucleoside phosphorylase">
    <location>
        <begin position="1"/>
        <end position="93"/>
    </location>
</feature>
<name>PPNP_PSEAB</name>
<reference key="1">
    <citation type="journal article" date="2006" name="Genome Biol.">
        <title>Genomic analysis reveals that Pseudomonas aeruginosa virulence is combinatorial.</title>
        <authorList>
            <person name="Lee D.G."/>
            <person name="Urbach J.M."/>
            <person name="Wu G."/>
            <person name="Liberati N.T."/>
            <person name="Feinbaum R.L."/>
            <person name="Miyata S."/>
            <person name="Diggins L.T."/>
            <person name="He J."/>
            <person name="Saucier M."/>
            <person name="Deziel E."/>
            <person name="Friedman L."/>
            <person name="Li L."/>
            <person name="Grills G."/>
            <person name="Montgomery K."/>
            <person name="Kucherlapati R."/>
            <person name="Rahme L.G."/>
            <person name="Ausubel F.M."/>
        </authorList>
    </citation>
    <scope>NUCLEOTIDE SEQUENCE [LARGE SCALE GENOMIC DNA]</scope>
    <source>
        <strain>UCBPP-PA14</strain>
    </source>
</reference>
<protein>
    <recommendedName>
        <fullName evidence="1">Pyrimidine/purine nucleoside phosphorylase</fullName>
        <ecNumber evidence="1">2.4.2.1</ecNumber>
        <ecNumber evidence="1">2.4.2.2</ecNumber>
    </recommendedName>
    <alternativeName>
        <fullName evidence="1">Adenosine phosphorylase</fullName>
    </alternativeName>
    <alternativeName>
        <fullName evidence="1">Cytidine phosphorylase</fullName>
    </alternativeName>
    <alternativeName>
        <fullName evidence="1">Guanosine phosphorylase</fullName>
    </alternativeName>
    <alternativeName>
        <fullName evidence="1">Inosine phosphorylase</fullName>
    </alternativeName>
    <alternativeName>
        <fullName evidence="1">Thymidine phosphorylase</fullName>
    </alternativeName>
    <alternativeName>
        <fullName evidence="1">Uridine phosphorylase</fullName>
    </alternativeName>
    <alternativeName>
        <fullName evidence="1">Xanthosine phosphorylase</fullName>
    </alternativeName>
</protein>